<proteinExistence type="inferred from homology"/>
<comment type="function">
    <text evidence="1">This protein binds to the 23S rRNA, and is important in its secondary structure. It is located near the subunit interface in the base of the L7/L12 stalk, and near the tRNA binding site of the peptidyltransferase center.</text>
</comment>
<comment type="subunit">
    <text evidence="1">Part of the 50S ribosomal subunit.</text>
</comment>
<comment type="similarity">
    <text evidence="1">Belongs to the universal ribosomal protein uL6 family.</text>
</comment>
<name>RL6_FRAT1</name>
<feature type="chain" id="PRO_0000260869" description="Large ribosomal subunit protein uL6">
    <location>
        <begin position="1"/>
        <end position="178"/>
    </location>
</feature>
<gene>
    <name evidence="1" type="primary">rplF</name>
    <name type="ordered locus">FTF0340</name>
</gene>
<accession>Q14JA5</accession>
<organism>
    <name type="scientific">Francisella tularensis subsp. tularensis (strain FSC 198)</name>
    <dbReference type="NCBI Taxonomy" id="393115"/>
    <lineage>
        <taxon>Bacteria</taxon>
        <taxon>Pseudomonadati</taxon>
        <taxon>Pseudomonadota</taxon>
        <taxon>Gammaproteobacteria</taxon>
        <taxon>Thiotrichales</taxon>
        <taxon>Francisellaceae</taxon>
        <taxon>Francisella</taxon>
    </lineage>
</organism>
<evidence type="ECO:0000255" key="1">
    <source>
        <dbReference type="HAMAP-Rule" id="MF_01365"/>
    </source>
</evidence>
<evidence type="ECO:0000305" key="2"/>
<sequence>MSRIGKKPVVIPSGVTINVAAGNKVEVKGAKATLSKTFSTDVTFSVADNVATITPNNNSKNAVAQSGTARAILSNMVEGVSKGFERKLKIIGVGYRAKAQGNELNLTLGFSHPVVYKLPQGITAETPAPTEIILKGADKELLGKVASEIREYRKPEPYKGKGVRYEDEYVAKKEAKKK</sequence>
<keyword id="KW-0687">Ribonucleoprotein</keyword>
<keyword id="KW-0689">Ribosomal protein</keyword>
<keyword id="KW-0694">RNA-binding</keyword>
<keyword id="KW-0699">rRNA-binding</keyword>
<protein>
    <recommendedName>
        <fullName evidence="1">Large ribosomal subunit protein uL6</fullName>
    </recommendedName>
    <alternativeName>
        <fullName evidence="2">50S ribosomal protein L6</fullName>
    </alternativeName>
</protein>
<reference key="1">
    <citation type="journal article" date="2007" name="PLoS ONE">
        <title>Genome sequencing shows that European isolates of Francisella tularensis subspecies tularensis are almost identical to US laboratory strain Schu S4.</title>
        <authorList>
            <person name="Chaudhuri R.R."/>
            <person name="Ren C.-P."/>
            <person name="Desmond L."/>
            <person name="Vincent G.A."/>
            <person name="Silman N.J."/>
            <person name="Brehm J.K."/>
            <person name="Elmore M.J."/>
            <person name="Hudson M.J."/>
            <person name="Forsman M."/>
            <person name="Isherwood K.E."/>
            <person name="Gurycova D."/>
            <person name="Minton N.P."/>
            <person name="Titball R.W."/>
            <person name="Pallen M.J."/>
            <person name="Vipond R."/>
        </authorList>
    </citation>
    <scope>NUCLEOTIDE SEQUENCE [LARGE SCALE GENOMIC DNA]</scope>
    <source>
        <strain>FSC 198</strain>
    </source>
</reference>
<dbReference type="EMBL" id="AM286280">
    <property type="protein sequence ID" value="CAL08356.1"/>
    <property type="molecule type" value="Genomic_DNA"/>
</dbReference>
<dbReference type="RefSeq" id="WP_003021589.1">
    <property type="nucleotide sequence ID" value="NC_008245.1"/>
</dbReference>
<dbReference type="SMR" id="Q14JA5"/>
<dbReference type="KEGG" id="ftf:FTF0340"/>
<dbReference type="HOGENOM" id="CLU_065464_1_2_6"/>
<dbReference type="GO" id="GO:0022625">
    <property type="term" value="C:cytosolic large ribosomal subunit"/>
    <property type="evidence" value="ECO:0007669"/>
    <property type="project" value="TreeGrafter"/>
</dbReference>
<dbReference type="GO" id="GO:0019843">
    <property type="term" value="F:rRNA binding"/>
    <property type="evidence" value="ECO:0007669"/>
    <property type="project" value="UniProtKB-UniRule"/>
</dbReference>
<dbReference type="GO" id="GO:0003735">
    <property type="term" value="F:structural constituent of ribosome"/>
    <property type="evidence" value="ECO:0007669"/>
    <property type="project" value="InterPro"/>
</dbReference>
<dbReference type="GO" id="GO:0002181">
    <property type="term" value="P:cytoplasmic translation"/>
    <property type="evidence" value="ECO:0007669"/>
    <property type="project" value="TreeGrafter"/>
</dbReference>
<dbReference type="FunFam" id="3.90.930.12:FF:000001">
    <property type="entry name" value="50S ribosomal protein L6"/>
    <property type="match status" value="1"/>
</dbReference>
<dbReference type="Gene3D" id="3.90.930.12">
    <property type="entry name" value="Ribosomal protein L6, alpha-beta domain"/>
    <property type="match status" value="2"/>
</dbReference>
<dbReference type="HAMAP" id="MF_01365_B">
    <property type="entry name" value="Ribosomal_uL6_B"/>
    <property type="match status" value="1"/>
</dbReference>
<dbReference type="InterPro" id="IPR000702">
    <property type="entry name" value="Ribosomal_uL6-like"/>
</dbReference>
<dbReference type="InterPro" id="IPR036789">
    <property type="entry name" value="Ribosomal_uL6-like_a/b-dom_sf"/>
</dbReference>
<dbReference type="InterPro" id="IPR020040">
    <property type="entry name" value="Ribosomal_uL6_a/b-dom"/>
</dbReference>
<dbReference type="InterPro" id="IPR019906">
    <property type="entry name" value="Ribosomal_uL6_bac-type"/>
</dbReference>
<dbReference type="InterPro" id="IPR002358">
    <property type="entry name" value="Ribosomal_uL6_CS"/>
</dbReference>
<dbReference type="NCBIfam" id="TIGR03654">
    <property type="entry name" value="L6_bact"/>
    <property type="match status" value="1"/>
</dbReference>
<dbReference type="PANTHER" id="PTHR11655">
    <property type="entry name" value="60S/50S RIBOSOMAL PROTEIN L6/L9"/>
    <property type="match status" value="1"/>
</dbReference>
<dbReference type="PANTHER" id="PTHR11655:SF14">
    <property type="entry name" value="LARGE RIBOSOMAL SUBUNIT PROTEIN UL6M"/>
    <property type="match status" value="1"/>
</dbReference>
<dbReference type="Pfam" id="PF00347">
    <property type="entry name" value="Ribosomal_L6"/>
    <property type="match status" value="2"/>
</dbReference>
<dbReference type="PIRSF" id="PIRSF002162">
    <property type="entry name" value="Ribosomal_L6"/>
    <property type="match status" value="1"/>
</dbReference>
<dbReference type="PRINTS" id="PR00059">
    <property type="entry name" value="RIBOSOMALL6"/>
</dbReference>
<dbReference type="SUPFAM" id="SSF56053">
    <property type="entry name" value="Ribosomal protein L6"/>
    <property type="match status" value="2"/>
</dbReference>
<dbReference type="PROSITE" id="PS00525">
    <property type="entry name" value="RIBOSOMAL_L6_1"/>
    <property type="match status" value="1"/>
</dbReference>